<gene>
    <name type="ORF">R144.12</name>
</gene>
<keyword id="KW-1185">Reference proteome</keyword>
<reference key="1">
    <citation type="journal article" date="1998" name="Science">
        <title>Genome sequence of the nematode C. elegans: a platform for investigating biology.</title>
        <authorList>
            <consortium name="The C. elegans sequencing consortium"/>
        </authorList>
    </citation>
    <scope>NUCLEOTIDE SEQUENCE [LARGE SCALE GENOMIC DNA]</scope>
    <source>
        <strain>Bristol N2</strain>
    </source>
</reference>
<organism>
    <name type="scientific">Caenorhabditis elegans</name>
    <dbReference type="NCBI Taxonomy" id="6239"/>
    <lineage>
        <taxon>Eukaryota</taxon>
        <taxon>Metazoa</taxon>
        <taxon>Ecdysozoa</taxon>
        <taxon>Nematoda</taxon>
        <taxon>Chromadorea</taxon>
        <taxon>Rhabditida</taxon>
        <taxon>Rhabditina</taxon>
        <taxon>Rhabditomorpha</taxon>
        <taxon>Rhabditoidea</taxon>
        <taxon>Rhabditidae</taxon>
        <taxon>Peloderinae</taxon>
        <taxon>Caenorhabditis</taxon>
    </lineage>
</organism>
<accession>Q629J5</accession>
<name>YRRC_CAEEL</name>
<dbReference type="EMBL" id="FO080694">
    <property type="protein sequence ID" value="CCD65879.1"/>
    <property type="molecule type" value="Genomic_DNA"/>
</dbReference>
<dbReference type="RefSeq" id="NP_001022726.1">
    <property type="nucleotide sequence ID" value="NM_001027555.7"/>
</dbReference>
<dbReference type="SMR" id="Q629J5"/>
<dbReference type="BioGRID" id="532007">
    <property type="interactions" value="1"/>
</dbReference>
<dbReference type="FunCoup" id="Q629J5">
    <property type="interactions" value="4"/>
</dbReference>
<dbReference type="STRING" id="6239.R144.12.1"/>
<dbReference type="PaxDb" id="6239-R144.12"/>
<dbReference type="PeptideAtlas" id="Q629J5"/>
<dbReference type="EnsemblMetazoa" id="R144.12.1">
    <property type="protein sequence ID" value="R144.12.1"/>
    <property type="gene ID" value="WBGene00043060"/>
</dbReference>
<dbReference type="GeneID" id="259331"/>
<dbReference type="KEGG" id="cel:CELE_R144.12"/>
<dbReference type="UCSC" id="R144.12">
    <property type="organism name" value="c. elegans"/>
</dbReference>
<dbReference type="AGR" id="WB:WBGene00043060"/>
<dbReference type="CTD" id="259331"/>
<dbReference type="WormBase" id="R144.12">
    <property type="protein sequence ID" value="CE37548"/>
    <property type="gene ID" value="WBGene00043060"/>
</dbReference>
<dbReference type="eggNOG" id="ENOG502S1CJ">
    <property type="taxonomic scope" value="Eukaryota"/>
</dbReference>
<dbReference type="GeneTree" id="ENSGT00390000010354"/>
<dbReference type="HOGENOM" id="CLU_074448_0_0_1"/>
<dbReference type="InParanoid" id="Q629J5"/>
<dbReference type="OMA" id="VTHGALN"/>
<dbReference type="OrthoDB" id="110174at2759"/>
<dbReference type="PhylomeDB" id="Q629J5"/>
<dbReference type="PRO" id="PR:Q629J5"/>
<dbReference type="Proteomes" id="UP000001940">
    <property type="component" value="Chromosome III"/>
</dbReference>
<dbReference type="Bgee" id="WBGene00043060">
    <property type="expression patterns" value="Expressed in pharyngeal muscle cell (C elegans) and 3 other cell types or tissues"/>
</dbReference>
<dbReference type="GO" id="GO:0016020">
    <property type="term" value="C:membrane"/>
    <property type="evidence" value="ECO:0000318"/>
    <property type="project" value="GO_Central"/>
</dbReference>
<dbReference type="InterPro" id="IPR026620">
    <property type="entry name" value="TMEM177"/>
</dbReference>
<dbReference type="PANTHER" id="PTHR21824">
    <property type="entry name" value="TRANSMEMBRANE PROTEIN 177"/>
    <property type="match status" value="1"/>
</dbReference>
<dbReference type="PANTHER" id="PTHR21824:SF4">
    <property type="entry name" value="TRANSMEMBRANE PROTEIN 177"/>
    <property type="match status" value="1"/>
</dbReference>
<feature type="chain" id="PRO_0000065443" description="Uncharacterized protein R144.12">
    <location>
        <begin position="1"/>
        <end position="333"/>
    </location>
</feature>
<protein>
    <recommendedName>
        <fullName>Uncharacterized protein R144.12</fullName>
    </recommendedName>
</protein>
<sequence length="333" mass="38006">MGSTYSEWNQRATLWLQSKMGRRARIGLLAATVVGYPIGSILINGPFVNFTFPKRYSVEPLPEHLVPIADQEYGRFLDRESRIPKDAVVSVQIQRSMTNSDETVASGSLGVRTGLNLAVPMYSRFKNAQEALDYFKSQNPEGMDFLGERVPIRWDSEIAEEFTDCYAFSDNAHHFLFLRDLYAYDGYASLAQRSISWATWTTFSSIFTYWIHNSSRIMGGSAASFAIAYPILLGAAWYANKQWHLLYRYLTDIHADAEAARASFEHAEGGKEYYWKMLKRNRIMRDIKPSLWNQITATGDIRGIATPIITRYDHLKDVNEEDDELKAVIGMDD</sequence>
<proteinExistence type="predicted"/>